<reference key="1">
    <citation type="journal article" date="2002" name="Mol. Microbiol.">
        <title>Expression of the glutamyl-tRNA synthetase gene from the cyanobacterium Synechococcus sp PCC 7942 depends on nitrogen availability and the global regulator NtcA.</title>
        <authorList>
            <person name="Luque I."/>
            <person name="Contreras A."/>
            <person name="Zabulon G."/>
            <person name="Herrero A."/>
            <person name="Houmard J."/>
        </authorList>
    </citation>
    <scope>NUCLEOTIDE SEQUENCE [GENOMIC DNA]</scope>
</reference>
<reference key="2">
    <citation type="submission" date="2005-08" db="EMBL/GenBank/DDBJ databases">
        <title>Complete sequence of chromosome 1 of Synechococcus elongatus PCC 7942.</title>
        <authorList>
            <consortium name="US DOE Joint Genome Institute"/>
            <person name="Copeland A."/>
            <person name="Lucas S."/>
            <person name="Lapidus A."/>
            <person name="Barry K."/>
            <person name="Detter J.C."/>
            <person name="Glavina T."/>
            <person name="Hammon N."/>
            <person name="Israni S."/>
            <person name="Pitluck S."/>
            <person name="Schmutz J."/>
            <person name="Larimer F."/>
            <person name="Land M."/>
            <person name="Kyrpides N."/>
            <person name="Lykidis A."/>
            <person name="Golden S."/>
            <person name="Richardson P."/>
        </authorList>
    </citation>
    <scope>NUCLEOTIDE SEQUENCE [LARGE SCALE GENOMIC DNA]</scope>
    <source>
        <strain>ATCC 33912 / PCC 7942 / FACHB-805</strain>
    </source>
</reference>
<gene>
    <name evidence="1" type="primary">gltX</name>
    <name type="ordered locus">Synpcc7942_2393</name>
</gene>
<sequence>MSVRVRIAPSPTGNLHIGTARTAVFNWLFARRHQGQFILRIEDTDLERSRSEYTDNILTGLQWLGLNWDEGPFYQTQRLDLYKAAVQQLLDSGKAYRCYCTEAELEALRESQRARNEAPRYDNRHRDLTPEQEAAFQAEGREAVIRFRIDDDREIAWTDLVRDRVVWKGSDLGGDMVIARRSPAGTIGQPLYNLAVVVDDIDMTISHVIRGEDHIANTAKQILLYEALGAAVPEFAHTPLILNKEGRKLSKRDGVTSISDFQNLGYLPEAIANYMTLLGWSPVEGMDERFSLAEAATVFDFDRVNKAGAKFDWDKLNWLNSQVIKEKSASELVALLQPFWSKAGVDTAAYPAAWLEELATLLGPSLVTLTDIVGQSQLFFSQGIELQEDAIAQLGQAGSKAVLQQILEALPSEALTLEVAKGLIDQAVKAAGVKKGIGMRSLRAALMGSMQGPDLLTSWVLLHQAGQAQPRLQAAIAAAQG</sequence>
<organism>
    <name type="scientific">Synechococcus elongatus (strain ATCC 33912 / PCC 7942 / FACHB-805)</name>
    <name type="common">Anacystis nidulans R2</name>
    <dbReference type="NCBI Taxonomy" id="1140"/>
    <lineage>
        <taxon>Bacteria</taxon>
        <taxon>Bacillati</taxon>
        <taxon>Cyanobacteriota</taxon>
        <taxon>Cyanophyceae</taxon>
        <taxon>Synechococcales</taxon>
        <taxon>Synechococcaceae</taxon>
        <taxon>Synechococcus</taxon>
    </lineage>
</organism>
<accession>Q8L1E5</accession>
<accession>Q31KJ6</accession>
<keyword id="KW-0030">Aminoacyl-tRNA synthetase</keyword>
<keyword id="KW-0067">ATP-binding</keyword>
<keyword id="KW-0963">Cytoplasm</keyword>
<keyword id="KW-0436">Ligase</keyword>
<keyword id="KW-0479">Metal-binding</keyword>
<keyword id="KW-0547">Nucleotide-binding</keyword>
<keyword id="KW-0648">Protein biosynthesis</keyword>
<keyword id="KW-1185">Reference proteome</keyword>
<keyword id="KW-0862">Zinc</keyword>
<name>SYE_SYNE7</name>
<comment type="function">
    <text evidence="1">Catalyzes the attachment of glutamate to tRNA(Glu) in a two-step reaction: glutamate is first activated by ATP to form Glu-AMP and then transferred to the acceptor end of tRNA(Glu).</text>
</comment>
<comment type="catalytic activity">
    <reaction evidence="1">
        <text>tRNA(Glu) + L-glutamate + ATP = L-glutamyl-tRNA(Glu) + AMP + diphosphate</text>
        <dbReference type="Rhea" id="RHEA:23540"/>
        <dbReference type="Rhea" id="RHEA-COMP:9663"/>
        <dbReference type="Rhea" id="RHEA-COMP:9680"/>
        <dbReference type="ChEBI" id="CHEBI:29985"/>
        <dbReference type="ChEBI" id="CHEBI:30616"/>
        <dbReference type="ChEBI" id="CHEBI:33019"/>
        <dbReference type="ChEBI" id="CHEBI:78442"/>
        <dbReference type="ChEBI" id="CHEBI:78520"/>
        <dbReference type="ChEBI" id="CHEBI:456215"/>
        <dbReference type="EC" id="6.1.1.17"/>
    </reaction>
</comment>
<comment type="cofactor">
    <cofactor evidence="1">
        <name>Zn(2+)</name>
        <dbReference type="ChEBI" id="CHEBI:29105"/>
    </cofactor>
    <text evidence="1">Binds 1 zinc ion per subunit.</text>
</comment>
<comment type="subunit">
    <text evidence="1">Monomer.</text>
</comment>
<comment type="subcellular location">
    <subcellularLocation>
        <location evidence="1">Cytoplasm</location>
    </subcellularLocation>
</comment>
<comment type="similarity">
    <text evidence="1">Belongs to the class-I aminoacyl-tRNA synthetase family. Glutamate--tRNA ligase type 1 subfamily.</text>
</comment>
<protein>
    <recommendedName>
        <fullName evidence="1">Glutamate--tRNA ligase</fullName>
        <ecNumber evidence="1">6.1.1.17</ecNumber>
    </recommendedName>
    <alternativeName>
        <fullName evidence="1">Glutamyl-tRNA synthetase</fullName>
        <shortName evidence="1">GluRS</shortName>
    </alternativeName>
</protein>
<dbReference type="EC" id="6.1.1.17" evidence="1"/>
<dbReference type="EMBL" id="AJ440366">
    <property type="protein sequence ID" value="CAD29422.1"/>
    <property type="molecule type" value="Genomic_DNA"/>
</dbReference>
<dbReference type="EMBL" id="CP000100">
    <property type="protein sequence ID" value="ABB58423.1"/>
    <property type="molecule type" value="Genomic_DNA"/>
</dbReference>
<dbReference type="RefSeq" id="WP_011244022.1">
    <property type="nucleotide sequence ID" value="NZ_JACJTX010000001.1"/>
</dbReference>
<dbReference type="SMR" id="Q8L1E5"/>
<dbReference type="STRING" id="1140.Synpcc7942_2393"/>
<dbReference type="PaxDb" id="1140-Synpcc7942_2393"/>
<dbReference type="GeneID" id="72431282"/>
<dbReference type="KEGG" id="syf:Synpcc7942_2393"/>
<dbReference type="eggNOG" id="COG0008">
    <property type="taxonomic scope" value="Bacteria"/>
</dbReference>
<dbReference type="HOGENOM" id="CLU_015768_6_0_3"/>
<dbReference type="OrthoDB" id="9807503at2"/>
<dbReference type="BioCyc" id="SYNEL:SYNPCC7942_2393-MONOMER"/>
<dbReference type="Proteomes" id="UP000889800">
    <property type="component" value="Chromosome"/>
</dbReference>
<dbReference type="GO" id="GO:0005829">
    <property type="term" value="C:cytosol"/>
    <property type="evidence" value="ECO:0007669"/>
    <property type="project" value="TreeGrafter"/>
</dbReference>
<dbReference type="GO" id="GO:0005524">
    <property type="term" value="F:ATP binding"/>
    <property type="evidence" value="ECO:0007669"/>
    <property type="project" value="UniProtKB-UniRule"/>
</dbReference>
<dbReference type="GO" id="GO:0004818">
    <property type="term" value="F:glutamate-tRNA ligase activity"/>
    <property type="evidence" value="ECO:0007669"/>
    <property type="project" value="UniProtKB-UniRule"/>
</dbReference>
<dbReference type="GO" id="GO:0000049">
    <property type="term" value="F:tRNA binding"/>
    <property type="evidence" value="ECO:0007669"/>
    <property type="project" value="InterPro"/>
</dbReference>
<dbReference type="GO" id="GO:0008270">
    <property type="term" value="F:zinc ion binding"/>
    <property type="evidence" value="ECO:0007669"/>
    <property type="project" value="UniProtKB-UniRule"/>
</dbReference>
<dbReference type="GO" id="GO:0006424">
    <property type="term" value="P:glutamyl-tRNA aminoacylation"/>
    <property type="evidence" value="ECO:0007669"/>
    <property type="project" value="UniProtKB-UniRule"/>
</dbReference>
<dbReference type="CDD" id="cd00808">
    <property type="entry name" value="GluRS_core"/>
    <property type="match status" value="1"/>
</dbReference>
<dbReference type="FunFam" id="3.40.50.620:FF:000007">
    <property type="entry name" value="Glutamate--tRNA ligase"/>
    <property type="match status" value="1"/>
</dbReference>
<dbReference type="Gene3D" id="1.10.10.350">
    <property type="match status" value="1"/>
</dbReference>
<dbReference type="Gene3D" id="1.10.8.70">
    <property type="entry name" value="Glutamate-tRNA synthetase, class I, anticodon-binding domain 1"/>
    <property type="match status" value="1"/>
</dbReference>
<dbReference type="Gene3D" id="1.10.1160.10">
    <property type="entry name" value="Glutamyl-trna Synthetase, Domain 2"/>
    <property type="match status" value="1"/>
</dbReference>
<dbReference type="Gene3D" id="3.90.800.10">
    <property type="entry name" value="Glutamyl-tRNA Synthetase, Domain 3"/>
    <property type="match status" value="1"/>
</dbReference>
<dbReference type="Gene3D" id="3.40.50.620">
    <property type="entry name" value="HUPs"/>
    <property type="match status" value="1"/>
</dbReference>
<dbReference type="HAMAP" id="MF_00022">
    <property type="entry name" value="Glu_tRNA_synth_type1"/>
    <property type="match status" value="1"/>
</dbReference>
<dbReference type="InterPro" id="IPR045462">
    <property type="entry name" value="aa-tRNA-synth_I_cd-bd"/>
</dbReference>
<dbReference type="InterPro" id="IPR020751">
    <property type="entry name" value="aa-tRNA-synth_I_codon-bd_sub2"/>
</dbReference>
<dbReference type="InterPro" id="IPR001412">
    <property type="entry name" value="aa-tRNA-synth_I_CS"/>
</dbReference>
<dbReference type="InterPro" id="IPR008925">
    <property type="entry name" value="aa_tRNA-synth_I_cd-bd_sf"/>
</dbReference>
<dbReference type="InterPro" id="IPR004527">
    <property type="entry name" value="Glu-tRNA-ligase_bac/mito"/>
</dbReference>
<dbReference type="InterPro" id="IPR020752">
    <property type="entry name" value="Glu-tRNA-synth_I_codon-bd_sub1"/>
</dbReference>
<dbReference type="InterPro" id="IPR000924">
    <property type="entry name" value="Glu/Gln-tRNA-synth"/>
</dbReference>
<dbReference type="InterPro" id="IPR020058">
    <property type="entry name" value="Glu/Gln-tRNA-synth_Ib_cat-dom"/>
</dbReference>
<dbReference type="InterPro" id="IPR020061">
    <property type="entry name" value="Glu_tRNA_lig_a-bdl"/>
</dbReference>
<dbReference type="InterPro" id="IPR049940">
    <property type="entry name" value="GluQ/Sye"/>
</dbReference>
<dbReference type="InterPro" id="IPR033910">
    <property type="entry name" value="GluRS_core"/>
</dbReference>
<dbReference type="InterPro" id="IPR014729">
    <property type="entry name" value="Rossmann-like_a/b/a_fold"/>
</dbReference>
<dbReference type="NCBIfam" id="TIGR00464">
    <property type="entry name" value="gltX_bact"/>
    <property type="match status" value="1"/>
</dbReference>
<dbReference type="PANTHER" id="PTHR43311">
    <property type="entry name" value="GLUTAMATE--TRNA LIGASE"/>
    <property type="match status" value="1"/>
</dbReference>
<dbReference type="PANTHER" id="PTHR43311:SF2">
    <property type="entry name" value="GLUTAMATE--TRNA LIGASE, MITOCHONDRIAL-RELATED"/>
    <property type="match status" value="1"/>
</dbReference>
<dbReference type="Pfam" id="PF19269">
    <property type="entry name" value="Anticodon_2"/>
    <property type="match status" value="1"/>
</dbReference>
<dbReference type="Pfam" id="PF00749">
    <property type="entry name" value="tRNA-synt_1c"/>
    <property type="match status" value="1"/>
</dbReference>
<dbReference type="PRINTS" id="PR00987">
    <property type="entry name" value="TRNASYNTHGLU"/>
</dbReference>
<dbReference type="SUPFAM" id="SSF48163">
    <property type="entry name" value="An anticodon-binding domain of class I aminoacyl-tRNA synthetases"/>
    <property type="match status" value="1"/>
</dbReference>
<dbReference type="SUPFAM" id="SSF52374">
    <property type="entry name" value="Nucleotidylyl transferase"/>
    <property type="match status" value="1"/>
</dbReference>
<dbReference type="PROSITE" id="PS00178">
    <property type="entry name" value="AA_TRNA_LIGASE_I"/>
    <property type="match status" value="1"/>
</dbReference>
<feature type="chain" id="PRO_0000119677" description="Glutamate--tRNA ligase">
    <location>
        <begin position="1"/>
        <end position="481"/>
    </location>
</feature>
<feature type="short sequence motif" description="'HIGH' region" evidence="1">
    <location>
        <begin position="9"/>
        <end position="19"/>
    </location>
</feature>
<feature type="short sequence motif" description="'KMSKS' region" evidence="1">
    <location>
        <begin position="248"/>
        <end position="252"/>
    </location>
</feature>
<feature type="binding site" evidence="1">
    <location>
        <position position="98"/>
    </location>
    <ligand>
        <name>Zn(2+)</name>
        <dbReference type="ChEBI" id="CHEBI:29105"/>
    </ligand>
</feature>
<feature type="binding site" evidence="1">
    <location>
        <position position="100"/>
    </location>
    <ligand>
        <name>Zn(2+)</name>
        <dbReference type="ChEBI" id="CHEBI:29105"/>
    </ligand>
</feature>
<feature type="binding site" evidence="1">
    <location>
        <position position="125"/>
    </location>
    <ligand>
        <name>Zn(2+)</name>
        <dbReference type="ChEBI" id="CHEBI:29105"/>
    </ligand>
</feature>
<feature type="binding site" evidence="1">
    <location>
        <position position="127"/>
    </location>
    <ligand>
        <name>Zn(2+)</name>
        <dbReference type="ChEBI" id="CHEBI:29105"/>
    </ligand>
</feature>
<feature type="binding site" evidence="1">
    <location>
        <position position="251"/>
    </location>
    <ligand>
        <name>ATP</name>
        <dbReference type="ChEBI" id="CHEBI:30616"/>
    </ligand>
</feature>
<proteinExistence type="inferred from homology"/>
<evidence type="ECO:0000255" key="1">
    <source>
        <dbReference type="HAMAP-Rule" id="MF_00022"/>
    </source>
</evidence>